<sequence>MKACSILFTTLITLAAAQKDSGSLDGQNSEDSSQKESSNSQEITPTTTKEAQESASTVVSTGKSLVQTSNVVSNTYAVAPSTTVVTTDAQGKTTTQYLWWVAESNSAVSTTSTASVQPTGETSSGITNSASSSTTSTSTDGPVTIVTTTNSLGETYTSTVWWLPSSATTDNTASSSKSSSGSSSKPESSTKVVSTIKSTYTTTSGSTVETLTTTYKSTVNGKVASVMSNSTNGAFAGTHIAYGAGAFAVGALLL</sequence>
<proteinExistence type="evidence at protein level"/>
<keyword id="KW-1003">Cell membrane</keyword>
<keyword id="KW-0961">Cell wall biogenesis/degradation</keyword>
<keyword id="KW-0325">Glycoprotein</keyword>
<keyword id="KW-0336">GPI-anchor</keyword>
<keyword id="KW-0449">Lipoprotein</keyword>
<keyword id="KW-0472">Membrane</keyword>
<keyword id="KW-1185">Reference proteome</keyword>
<keyword id="KW-0732">Signal</keyword>
<reference key="1">
    <citation type="journal article" date="1997" name="Nature">
        <title>The nucleotide sequence of Saccharomyces cerevisiae chromosome XII.</title>
        <authorList>
            <person name="Johnston M."/>
            <person name="Hillier L.W."/>
            <person name="Riles L."/>
            <person name="Albermann K."/>
            <person name="Andre B."/>
            <person name="Ansorge W."/>
            <person name="Benes V."/>
            <person name="Brueckner M."/>
            <person name="Delius H."/>
            <person name="Dubois E."/>
            <person name="Duesterhoeft A."/>
            <person name="Entian K.-D."/>
            <person name="Floeth M."/>
            <person name="Goffeau A."/>
            <person name="Hebling U."/>
            <person name="Heumann K."/>
            <person name="Heuss-Neitzel D."/>
            <person name="Hilbert H."/>
            <person name="Hilger F."/>
            <person name="Kleine K."/>
            <person name="Koetter P."/>
            <person name="Louis E.J."/>
            <person name="Messenguy F."/>
            <person name="Mewes H.-W."/>
            <person name="Miosga T."/>
            <person name="Moestl D."/>
            <person name="Mueller-Auer S."/>
            <person name="Nentwich U."/>
            <person name="Obermaier B."/>
            <person name="Piravandi E."/>
            <person name="Pohl T.M."/>
            <person name="Portetelle D."/>
            <person name="Purnelle B."/>
            <person name="Rechmann S."/>
            <person name="Rieger M."/>
            <person name="Rinke M."/>
            <person name="Rose M."/>
            <person name="Scharfe M."/>
            <person name="Scherens B."/>
            <person name="Scholler P."/>
            <person name="Schwager C."/>
            <person name="Schwarz S."/>
            <person name="Underwood A.P."/>
            <person name="Urrestarazu L.A."/>
            <person name="Vandenbol M."/>
            <person name="Verhasselt P."/>
            <person name="Vierendeels F."/>
            <person name="Voet M."/>
            <person name="Volckaert G."/>
            <person name="Voss H."/>
            <person name="Wambutt R."/>
            <person name="Wedler E."/>
            <person name="Wedler H."/>
            <person name="Zimmermann F.K."/>
            <person name="Zollner A."/>
            <person name="Hani J."/>
            <person name="Hoheisel J.D."/>
        </authorList>
    </citation>
    <scope>NUCLEOTIDE SEQUENCE [LARGE SCALE GENOMIC DNA]</scope>
    <source>
        <strain>ATCC 204508 / S288c</strain>
    </source>
</reference>
<reference key="2">
    <citation type="journal article" date="2014" name="G3 (Bethesda)">
        <title>The reference genome sequence of Saccharomyces cerevisiae: Then and now.</title>
        <authorList>
            <person name="Engel S.R."/>
            <person name="Dietrich F.S."/>
            <person name="Fisk D.G."/>
            <person name="Binkley G."/>
            <person name="Balakrishnan R."/>
            <person name="Costanzo M.C."/>
            <person name="Dwight S.S."/>
            <person name="Hitz B.C."/>
            <person name="Karra K."/>
            <person name="Nash R.S."/>
            <person name="Weng S."/>
            <person name="Wong E.D."/>
            <person name="Lloyd P."/>
            <person name="Skrzypek M.S."/>
            <person name="Miyasato S.R."/>
            <person name="Simison M."/>
            <person name="Cherry J.M."/>
        </authorList>
    </citation>
    <scope>GENOME REANNOTATION</scope>
    <source>
        <strain>ATCC 204508 / S288c</strain>
    </source>
</reference>
<reference key="3">
    <citation type="journal article" date="1999" name="J. Bacteriol.">
        <title>Amino acid residues in the omega-minus region participate in cellular localization of yeast glycosylphosphatidylinositol-attached proteins.</title>
        <authorList>
            <person name="Hamada K."/>
            <person name="Terashima H."/>
            <person name="Arisawa M."/>
            <person name="Yabuki N."/>
            <person name="Kitada K."/>
        </authorList>
    </citation>
    <scope>SUBCELLULAR LOCATION</scope>
</reference>
<reference key="4">
    <citation type="journal article" date="1999" name="Mol. Microbiol.">
        <title>Genome-wide analysis of gene expression regulated by the yeast cell wall integrity signalling pathway.</title>
        <authorList>
            <person name="Jung U.S."/>
            <person name="Levin D.E."/>
        </authorList>
    </citation>
    <scope>INDUCTION</scope>
</reference>
<reference key="5">
    <citation type="journal article" date="2000" name="Mol. Gen. Genet.">
        <title>Up-regulation of genes encoding glycosylphosphatidylinositol (GPI)-attached proteins in response to cell wall damage caused by disruption of FKS1 in Saccharomyces cerevisiae.</title>
        <authorList>
            <person name="Terashima H."/>
            <person name="Yabuki N."/>
            <person name="Arisawa M."/>
            <person name="Hamada K."/>
            <person name="Kitada K."/>
        </authorList>
    </citation>
    <scope>INDUCTION</scope>
    <scope>SUBCELLULAR LOCATION</scope>
</reference>
<reference key="6">
    <citation type="journal article" date="2003" name="Nature">
        <title>Global analysis of protein expression in yeast.</title>
        <authorList>
            <person name="Ghaemmaghami S."/>
            <person name="Huh W.-K."/>
            <person name="Bower K."/>
            <person name="Howson R.W."/>
            <person name="Belle A."/>
            <person name="Dephoure N."/>
            <person name="O'Shea E.K."/>
            <person name="Weissman J.S."/>
        </authorList>
    </citation>
    <scope>LEVEL OF PROTEIN EXPRESSION [LARGE SCALE ANALYSIS]</scope>
</reference>
<reference key="7">
    <citation type="journal article" date="2016" name="Curr. Microbiol.">
        <title>NCW2, a gene involved in the tolerance to polyhexamethylene biguanide (PHMB), may help in the organisation of beta-1,3-glucan structure of Saccharomyces cerevisiae cell wall.</title>
        <authorList>
            <person name="Elsztein C."/>
            <person name="de Lima R.C.P."/>
            <person name="de Barros Pita W."/>
            <person name="de Morais M.A. Jr."/>
        </authorList>
    </citation>
    <scope>FUNCTION</scope>
    <scope>DISRUPTION PHENOTYPE</scope>
    <scope>INDUCTION</scope>
</reference>
<gene>
    <name evidence="8" type="primary">NCW2</name>
    <name type="ordered locus">YLR194C</name>
</gene>
<comment type="function">
    <text evidence="7">Cell wall biogenesis protein that participates in the organization of the beta-glucan assembly (PubMed:27246500). Involved in the mechanism responsible for cell tolerance to polyhexamethylene biguanide (PHMB), an antifungal agent (PubMed:27246500).</text>
</comment>
<comment type="subcellular location">
    <subcellularLocation>
        <location evidence="3 5">Cell membrane</location>
        <topology evidence="3 5">Lipid-anchor</topology>
        <topology evidence="3 5">GPI-anchor</topology>
    </subcellularLocation>
</comment>
<comment type="induction">
    <text evidence="4 5 7">Positively regulated by cell integrity signaling through MPK1 in response to cell wall perturbation (PubMed:10594829, PubMed:11016834). Induction is dependent on transcription factor RLM1 (PubMed:10594829, PubMed:11016834). Expression is also up-regulated 7-fold upon exposure to polyhexamethylene biguanide (PHMB) (PubMed:27246500).</text>
</comment>
<comment type="disruption phenotype">
    <text evidence="7">Reduces significantly the growth rate of cells exposed to polyhexamethylene biguanide (PHMB) (PubMed:27246500). Leads to increased resistance to zymolyase treatment, indicating alterations in the beta-glucan network (PubMed:27246500).</text>
</comment>
<comment type="miscellaneous">
    <text evidence="6">Present with 688 molecules/cell in log phase SD medium.</text>
</comment>
<dbReference type="EMBL" id="U14913">
    <property type="protein sequence ID" value="AAB67435.1"/>
    <property type="molecule type" value="Genomic_DNA"/>
</dbReference>
<dbReference type="EMBL" id="BK006945">
    <property type="protein sequence ID" value="DAA09513.1"/>
    <property type="molecule type" value="Genomic_DNA"/>
</dbReference>
<dbReference type="PIR" id="S48547">
    <property type="entry name" value="S48547"/>
</dbReference>
<dbReference type="RefSeq" id="NP_013295.1">
    <property type="nucleotide sequence ID" value="NM_001182081.1"/>
</dbReference>
<dbReference type="BioGRID" id="31464">
    <property type="interactions" value="75"/>
</dbReference>
<dbReference type="DIP" id="DIP-4921N"/>
<dbReference type="FunCoup" id="Q05777">
    <property type="interactions" value="72"/>
</dbReference>
<dbReference type="IntAct" id="Q05777">
    <property type="interactions" value="3"/>
</dbReference>
<dbReference type="MINT" id="Q05777"/>
<dbReference type="STRING" id="4932.YLR194C"/>
<dbReference type="GlyCosmos" id="Q05777">
    <property type="glycosylation" value="1 site, No reported glycans"/>
</dbReference>
<dbReference type="GlyGen" id="Q05777">
    <property type="glycosylation" value="1 site"/>
</dbReference>
<dbReference type="PaxDb" id="4932-YLR194C"/>
<dbReference type="PeptideAtlas" id="Q05777"/>
<dbReference type="EnsemblFungi" id="YLR194C_mRNA">
    <property type="protein sequence ID" value="YLR194C"/>
    <property type="gene ID" value="YLR194C"/>
</dbReference>
<dbReference type="GeneID" id="850891"/>
<dbReference type="KEGG" id="sce:YLR194C"/>
<dbReference type="AGR" id="SGD:S000004184"/>
<dbReference type="SGD" id="S000004184">
    <property type="gene designation" value="NCW2"/>
</dbReference>
<dbReference type="VEuPathDB" id="FungiDB:YLR194C"/>
<dbReference type="eggNOG" id="ENOG502S9J5">
    <property type="taxonomic scope" value="Eukaryota"/>
</dbReference>
<dbReference type="HOGENOM" id="CLU_1094809_0_0_1"/>
<dbReference type="InParanoid" id="Q05777"/>
<dbReference type="OMA" id="LWWTPST"/>
<dbReference type="OrthoDB" id="4070679at2759"/>
<dbReference type="BioCyc" id="YEAST:G3O-32316-MONOMER"/>
<dbReference type="BioGRID-ORCS" id="850891">
    <property type="hits" value="0 hits in 10 CRISPR screens"/>
</dbReference>
<dbReference type="PRO" id="PR:Q05777"/>
<dbReference type="Proteomes" id="UP000002311">
    <property type="component" value="Chromosome XII"/>
</dbReference>
<dbReference type="RNAct" id="Q05777">
    <property type="molecule type" value="protein"/>
</dbReference>
<dbReference type="GO" id="GO:0005935">
    <property type="term" value="C:cellular bud neck"/>
    <property type="evidence" value="ECO:0007005"/>
    <property type="project" value="SGD"/>
</dbReference>
<dbReference type="GO" id="GO:0009277">
    <property type="term" value="C:fungal-type cell wall"/>
    <property type="evidence" value="ECO:0000314"/>
    <property type="project" value="SGD"/>
</dbReference>
<dbReference type="GO" id="GO:0000324">
    <property type="term" value="C:fungal-type vacuole"/>
    <property type="evidence" value="ECO:0007005"/>
    <property type="project" value="SGD"/>
</dbReference>
<dbReference type="GO" id="GO:0005886">
    <property type="term" value="C:plasma membrane"/>
    <property type="evidence" value="ECO:0000314"/>
    <property type="project" value="SGD"/>
</dbReference>
<dbReference type="GO" id="GO:0098552">
    <property type="term" value="C:side of membrane"/>
    <property type="evidence" value="ECO:0007669"/>
    <property type="project" value="UniProtKB-KW"/>
</dbReference>
<dbReference type="GO" id="GO:0005199">
    <property type="term" value="F:structural constituent of cell wall"/>
    <property type="evidence" value="ECO:0000314"/>
    <property type="project" value="SGD"/>
</dbReference>
<dbReference type="GO" id="GO:0006033">
    <property type="term" value="P:chitin localization"/>
    <property type="evidence" value="ECO:0000315"/>
    <property type="project" value="SGD"/>
</dbReference>
<dbReference type="GO" id="GO:0031505">
    <property type="term" value="P:fungal-type cell wall organization"/>
    <property type="evidence" value="ECO:0000315"/>
    <property type="project" value="SGD"/>
</dbReference>
<organism>
    <name type="scientific">Saccharomyces cerevisiae (strain ATCC 204508 / S288c)</name>
    <name type="common">Baker's yeast</name>
    <dbReference type="NCBI Taxonomy" id="559292"/>
    <lineage>
        <taxon>Eukaryota</taxon>
        <taxon>Fungi</taxon>
        <taxon>Dikarya</taxon>
        <taxon>Ascomycota</taxon>
        <taxon>Saccharomycotina</taxon>
        <taxon>Saccharomycetes</taxon>
        <taxon>Saccharomycetales</taxon>
        <taxon>Saccharomycetaceae</taxon>
        <taxon>Saccharomyces</taxon>
    </lineage>
</organism>
<name>NCW2_YEAST</name>
<protein>
    <recommendedName>
        <fullName evidence="8">Cell wall biogenesis protein NCW2</fullName>
    </recommendedName>
    <alternativeName>
        <fullName evidence="8">New cell wall protein 2</fullName>
    </alternativeName>
</protein>
<evidence type="ECO:0000255" key="1"/>
<evidence type="ECO:0000256" key="2">
    <source>
        <dbReference type="SAM" id="MobiDB-lite"/>
    </source>
</evidence>
<evidence type="ECO:0000269" key="3">
    <source>
    </source>
</evidence>
<evidence type="ECO:0000269" key="4">
    <source>
    </source>
</evidence>
<evidence type="ECO:0000269" key="5">
    <source>
    </source>
</evidence>
<evidence type="ECO:0000269" key="6">
    <source>
    </source>
</evidence>
<evidence type="ECO:0000269" key="7">
    <source>
    </source>
</evidence>
<evidence type="ECO:0000303" key="8">
    <source>
    </source>
</evidence>
<feature type="signal peptide" evidence="1">
    <location>
        <begin position="1"/>
        <end position="17"/>
    </location>
</feature>
<feature type="chain" id="PRO_0000247130" description="Cell wall biogenesis protein NCW2">
    <location>
        <begin position="18"/>
        <end position="232"/>
    </location>
</feature>
<feature type="propeptide" id="PRO_0000247131" description="Removed in mature form" evidence="1">
    <location>
        <begin position="233"/>
        <end position="254"/>
    </location>
</feature>
<feature type="region of interest" description="Disordered" evidence="2">
    <location>
        <begin position="19"/>
        <end position="57"/>
    </location>
</feature>
<feature type="region of interest" description="Disordered" evidence="2">
    <location>
        <begin position="111"/>
        <end position="143"/>
    </location>
</feature>
<feature type="region of interest" description="Disordered" evidence="2">
    <location>
        <begin position="167"/>
        <end position="191"/>
    </location>
</feature>
<feature type="compositionally biased region" description="Low complexity" evidence="2">
    <location>
        <begin position="27"/>
        <end position="42"/>
    </location>
</feature>
<feature type="compositionally biased region" description="Polar residues" evidence="2">
    <location>
        <begin position="43"/>
        <end position="57"/>
    </location>
</feature>
<feature type="compositionally biased region" description="Low complexity" evidence="2">
    <location>
        <begin position="111"/>
        <end position="139"/>
    </location>
</feature>
<feature type="lipid moiety-binding region" description="GPI-anchor amidated asparagine" evidence="1">
    <location>
        <position position="232"/>
    </location>
</feature>
<feature type="glycosylation site" description="N-linked (GlcNAc...) asparagine" evidence="1">
    <location>
        <position position="229"/>
    </location>
</feature>
<accession>Q05777</accession>
<accession>D6VYJ7</accession>